<proteinExistence type="inferred from homology"/>
<dbReference type="EC" id="4.1.99.17" evidence="1"/>
<dbReference type="EMBL" id="CP000030">
    <property type="protein sequence ID" value="AAV86488.1"/>
    <property type="status" value="ALT_INIT"/>
    <property type="molecule type" value="Genomic_DNA"/>
</dbReference>
<dbReference type="SMR" id="Q5PB42"/>
<dbReference type="KEGG" id="ama:AM440"/>
<dbReference type="HOGENOM" id="CLU_013181_2_1_5"/>
<dbReference type="UniPathway" id="UPA00060"/>
<dbReference type="GO" id="GO:0005829">
    <property type="term" value="C:cytosol"/>
    <property type="evidence" value="ECO:0007669"/>
    <property type="project" value="TreeGrafter"/>
</dbReference>
<dbReference type="GO" id="GO:0051539">
    <property type="term" value="F:4 iron, 4 sulfur cluster binding"/>
    <property type="evidence" value="ECO:0007669"/>
    <property type="project" value="UniProtKB-KW"/>
</dbReference>
<dbReference type="GO" id="GO:0016830">
    <property type="term" value="F:carbon-carbon lyase activity"/>
    <property type="evidence" value="ECO:0007669"/>
    <property type="project" value="InterPro"/>
</dbReference>
<dbReference type="GO" id="GO:0008270">
    <property type="term" value="F:zinc ion binding"/>
    <property type="evidence" value="ECO:0007669"/>
    <property type="project" value="UniProtKB-UniRule"/>
</dbReference>
<dbReference type="GO" id="GO:0009228">
    <property type="term" value="P:thiamine biosynthetic process"/>
    <property type="evidence" value="ECO:0007669"/>
    <property type="project" value="UniProtKB-KW"/>
</dbReference>
<dbReference type="GO" id="GO:0009229">
    <property type="term" value="P:thiamine diphosphate biosynthetic process"/>
    <property type="evidence" value="ECO:0007669"/>
    <property type="project" value="UniProtKB-UniRule"/>
</dbReference>
<dbReference type="FunFam" id="3.20.20.540:FF:000001">
    <property type="entry name" value="Phosphomethylpyrimidine synthase"/>
    <property type="match status" value="1"/>
</dbReference>
<dbReference type="Gene3D" id="6.10.250.620">
    <property type="match status" value="1"/>
</dbReference>
<dbReference type="Gene3D" id="3.20.20.540">
    <property type="entry name" value="Radical SAM ThiC family, central domain"/>
    <property type="match status" value="1"/>
</dbReference>
<dbReference type="HAMAP" id="MF_00089">
    <property type="entry name" value="ThiC"/>
    <property type="match status" value="1"/>
</dbReference>
<dbReference type="InterPro" id="IPR037509">
    <property type="entry name" value="ThiC"/>
</dbReference>
<dbReference type="InterPro" id="IPR025747">
    <property type="entry name" value="ThiC-associated_dom"/>
</dbReference>
<dbReference type="InterPro" id="IPR038521">
    <property type="entry name" value="ThiC/Bza_core_dom"/>
</dbReference>
<dbReference type="InterPro" id="IPR002817">
    <property type="entry name" value="ThiC/BzaA/B"/>
</dbReference>
<dbReference type="NCBIfam" id="NF006763">
    <property type="entry name" value="PRK09284.1"/>
    <property type="match status" value="1"/>
</dbReference>
<dbReference type="NCBIfam" id="NF009895">
    <property type="entry name" value="PRK13352.1"/>
    <property type="match status" value="1"/>
</dbReference>
<dbReference type="NCBIfam" id="TIGR00190">
    <property type="entry name" value="thiC"/>
    <property type="match status" value="1"/>
</dbReference>
<dbReference type="PANTHER" id="PTHR30557:SF1">
    <property type="entry name" value="PHOSPHOMETHYLPYRIMIDINE SYNTHASE, CHLOROPLASTIC"/>
    <property type="match status" value="1"/>
</dbReference>
<dbReference type="PANTHER" id="PTHR30557">
    <property type="entry name" value="THIAMINE BIOSYNTHESIS PROTEIN THIC"/>
    <property type="match status" value="1"/>
</dbReference>
<dbReference type="Pfam" id="PF13667">
    <property type="entry name" value="ThiC-associated"/>
    <property type="match status" value="1"/>
</dbReference>
<dbReference type="Pfam" id="PF01964">
    <property type="entry name" value="ThiC_Rad_SAM"/>
    <property type="match status" value="1"/>
</dbReference>
<dbReference type="SFLD" id="SFLDF00407">
    <property type="entry name" value="phosphomethylpyrimidine_syntha"/>
    <property type="match status" value="1"/>
</dbReference>
<dbReference type="SFLD" id="SFLDG01114">
    <property type="entry name" value="phosphomethylpyrimidine_syntha"/>
    <property type="match status" value="1"/>
</dbReference>
<dbReference type="SFLD" id="SFLDS00113">
    <property type="entry name" value="Radical_SAM_Phosphomethylpyrim"/>
    <property type="match status" value="1"/>
</dbReference>
<feature type="chain" id="PRO_0000242234" description="Phosphomethylpyrimidine synthase">
    <location>
        <begin position="1"/>
        <end position="553"/>
    </location>
</feature>
<feature type="binding site" evidence="1">
    <location>
        <position position="192"/>
    </location>
    <ligand>
        <name>substrate</name>
    </ligand>
</feature>
<feature type="binding site" evidence="1">
    <location>
        <position position="221"/>
    </location>
    <ligand>
        <name>substrate</name>
    </ligand>
</feature>
<feature type="binding site" evidence="1">
    <location>
        <position position="250"/>
    </location>
    <ligand>
        <name>substrate</name>
    </ligand>
</feature>
<feature type="binding site" evidence="1">
    <location>
        <position position="286"/>
    </location>
    <ligand>
        <name>substrate</name>
    </ligand>
</feature>
<feature type="binding site" evidence="1">
    <location>
        <begin position="306"/>
        <end position="308"/>
    </location>
    <ligand>
        <name>substrate</name>
    </ligand>
</feature>
<feature type="binding site" evidence="1">
    <location>
        <begin position="347"/>
        <end position="350"/>
    </location>
    <ligand>
        <name>substrate</name>
    </ligand>
</feature>
<feature type="binding site" evidence="1">
    <location>
        <position position="386"/>
    </location>
    <ligand>
        <name>substrate</name>
    </ligand>
</feature>
<feature type="binding site" evidence="1">
    <location>
        <position position="390"/>
    </location>
    <ligand>
        <name>Zn(2+)</name>
        <dbReference type="ChEBI" id="CHEBI:29105"/>
    </ligand>
</feature>
<feature type="binding site" evidence="1">
    <location>
        <position position="413"/>
    </location>
    <ligand>
        <name>substrate</name>
    </ligand>
</feature>
<feature type="binding site" evidence="1">
    <location>
        <position position="454"/>
    </location>
    <ligand>
        <name>Zn(2+)</name>
        <dbReference type="ChEBI" id="CHEBI:29105"/>
    </ligand>
</feature>
<feature type="binding site" evidence="1">
    <location>
        <position position="534"/>
    </location>
    <ligand>
        <name>[4Fe-4S] cluster</name>
        <dbReference type="ChEBI" id="CHEBI:49883"/>
        <note>4Fe-4S-S-AdoMet</note>
    </ligand>
</feature>
<feature type="binding site" evidence="1">
    <location>
        <position position="537"/>
    </location>
    <ligand>
        <name>[4Fe-4S] cluster</name>
        <dbReference type="ChEBI" id="CHEBI:49883"/>
        <note>4Fe-4S-S-AdoMet</note>
    </ligand>
</feature>
<feature type="binding site" evidence="1">
    <location>
        <position position="542"/>
    </location>
    <ligand>
        <name>[4Fe-4S] cluster</name>
        <dbReference type="ChEBI" id="CHEBI:49883"/>
        <note>4Fe-4S-S-AdoMet</note>
    </ligand>
</feature>
<comment type="function">
    <text evidence="1">Catalyzes the synthesis of the hydroxymethylpyrimidine phosphate (HMP-P) moiety of thiamine from aminoimidazole ribotide (AIR) in a radical S-adenosyl-L-methionine (SAM)-dependent reaction.</text>
</comment>
<comment type="catalytic activity">
    <reaction evidence="1">
        <text>5-amino-1-(5-phospho-beta-D-ribosyl)imidazole + S-adenosyl-L-methionine = 4-amino-2-methyl-5-(phosphooxymethyl)pyrimidine + CO + 5'-deoxyadenosine + formate + L-methionine + 3 H(+)</text>
        <dbReference type="Rhea" id="RHEA:24840"/>
        <dbReference type="ChEBI" id="CHEBI:15378"/>
        <dbReference type="ChEBI" id="CHEBI:15740"/>
        <dbReference type="ChEBI" id="CHEBI:17245"/>
        <dbReference type="ChEBI" id="CHEBI:17319"/>
        <dbReference type="ChEBI" id="CHEBI:57844"/>
        <dbReference type="ChEBI" id="CHEBI:58354"/>
        <dbReference type="ChEBI" id="CHEBI:59789"/>
        <dbReference type="ChEBI" id="CHEBI:137981"/>
        <dbReference type="EC" id="4.1.99.17"/>
    </reaction>
</comment>
<comment type="cofactor">
    <cofactor evidence="1">
        <name>[4Fe-4S] cluster</name>
        <dbReference type="ChEBI" id="CHEBI:49883"/>
    </cofactor>
    <text evidence="1">Binds 1 [4Fe-4S] cluster per subunit. The cluster is coordinated with 3 cysteines and an exchangeable S-adenosyl-L-methionine.</text>
</comment>
<comment type="pathway">
    <text evidence="1">Cofactor biosynthesis; thiamine diphosphate biosynthesis.</text>
</comment>
<comment type="subunit">
    <text evidence="1">Homodimer.</text>
</comment>
<comment type="similarity">
    <text evidence="1">Belongs to the ThiC family.</text>
</comment>
<comment type="sequence caution" evidence="2">
    <conflict type="erroneous initiation">
        <sequence resource="EMBL-CDS" id="AAV86488"/>
    </conflict>
</comment>
<keyword id="KW-0004">4Fe-4S</keyword>
<keyword id="KW-0408">Iron</keyword>
<keyword id="KW-0411">Iron-sulfur</keyword>
<keyword id="KW-0456">Lyase</keyword>
<keyword id="KW-0479">Metal-binding</keyword>
<keyword id="KW-0949">S-adenosyl-L-methionine</keyword>
<keyword id="KW-0784">Thiamine biosynthesis</keyword>
<keyword id="KW-0862">Zinc</keyword>
<accession>Q5PB42</accession>
<organism>
    <name type="scientific">Anaplasma marginale (strain St. Maries)</name>
    <dbReference type="NCBI Taxonomy" id="234826"/>
    <lineage>
        <taxon>Bacteria</taxon>
        <taxon>Pseudomonadati</taxon>
        <taxon>Pseudomonadota</taxon>
        <taxon>Alphaproteobacteria</taxon>
        <taxon>Rickettsiales</taxon>
        <taxon>Anaplasmataceae</taxon>
        <taxon>Anaplasma</taxon>
    </lineage>
</organism>
<sequence length="553" mass="60759">MDYSGVYPSSSKVYVRGNLYSDVNVGMRKVAIKNGTSEFLVYDTGGPYTDREAKLDIKSGIRKLRSTWIENRRDTSPVQRSFVPSGSSCTRYQKAAENVLRKIAGGSPVTQLFYAQNGIITPEMEYVAIRENALRMQVGSSETGAAAHQEITPEFVRQEIAAGRAIIPANINHPESEPMVIGRNFLVKINANIGNSAVLSGIEEEVKKMALAVAYGADTVMDLSTGSDIHNIREWIIRNSPVPIGTVPIYQALNKVKGVVENLSFEVFKETIIEQAEQGVDYFTIHAGVLKDYIKHARGRVTGIVSRGGAIMAQWCLAHNKENFLYTHFDEICEIMGSYDVAFSLGDGLRPGSIDDANDEAQFLELKTLGELVKVAWHHGCQVMVEGPGHVPMHLIKENMEKQLHLCSEAPFYTLGPLTTDIAPGYDHITSAIGAAMIGWYGTAMLCYVTPKEHLGLPNIDDVKAGVISYKIAAHAADLAKGNPSAYARDYALSQARFDFRWYDQFNLSLDPLTAKSLHDESLPGKGGKTANFCSMCGPKFCSMKLSKELVDQ</sequence>
<gene>
    <name evidence="1" type="primary">thiC</name>
    <name type="ordered locus">AM440</name>
</gene>
<reference key="1">
    <citation type="journal article" date="2005" name="Proc. Natl. Acad. Sci. U.S.A.">
        <title>Complete genome sequencing of Anaplasma marginale reveals that the surface is skewed to two superfamilies of outer membrane proteins.</title>
        <authorList>
            <person name="Brayton K.A."/>
            <person name="Kappmeyer L.S."/>
            <person name="Herndon D.R."/>
            <person name="Dark M.J."/>
            <person name="Tibbals D.L."/>
            <person name="Palmer G.H."/>
            <person name="McGuire T.C."/>
            <person name="Knowles D.P. Jr."/>
        </authorList>
    </citation>
    <scope>NUCLEOTIDE SEQUENCE [LARGE SCALE GENOMIC DNA]</scope>
    <source>
        <strain>St. Maries</strain>
    </source>
</reference>
<evidence type="ECO:0000255" key="1">
    <source>
        <dbReference type="HAMAP-Rule" id="MF_00089"/>
    </source>
</evidence>
<evidence type="ECO:0000305" key="2"/>
<protein>
    <recommendedName>
        <fullName evidence="1">Phosphomethylpyrimidine synthase</fullName>
        <ecNumber evidence="1">4.1.99.17</ecNumber>
    </recommendedName>
    <alternativeName>
        <fullName evidence="1">Hydroxymethylpyrimidine phosphate synthase</fullName>
        <shortName evidence="1">HMP-P synthase</shortName>
        <shortName evidence="1">HMP-phosphate synthase</shortName>
        <shortName evidence="1">HMPP synthase</shortName>
    </alternativeName>
    <alternativeName>
        <fullName evidence="1">Thiamine biosynthesis protein ThiC</fullName>
    </alternativeName>
</protein>
<name>THIC_ANAMM</name>